<keyword id="KW-0963">Cytoplasm</keyword>
<keyword id="KW-0255">Endonuclease</keyword>
<keyword id="KW-0378">Hydrolase</keyword>
<keyword id="KW-0460">Magnesium</keyword>
<keyword id="KW-0479">Metal-binding</keyword>
<keyword id="KW-0540">Nuclease</keyword>
<gene>
    <name evidence="1" type="primary">rnhA</name>
    <name type="ordered locus">A1E_01125</name>
</gene>
<comment type="function">
    <text evidence="1">Endonuclease that specifically degrades the RNA of RNA-DNA hybrids.</text>
</comment>
<comment type="catalytic activity">
    <reaction evidence="1">
        <text>Endonucleolytic cleavage to 5'-phosphomonoester.</text>
        <dbReference type="EC" id="3.1.26.4"/>
    </reaction>
</comment>
<comment type="cofactor">
    <cofactor evidence="1">
        <name>Mg(2+)</name>
        <dbReference type="ChEBI" id="CHEBI:18420"/>
    </cofactor>
    <text evidence="1">Binds 1 Mg(2+) ion per subunit. May bind a second metal ion at a regulatory site, or after substrate binding.</text>
</comment>
<comment type="subunit">
    <text evidence="1">Monomer.</text>
</comment>
<comment type="subcellular location">
    <subcellularLocation>
        <location evidence="1">Cytoplasm</location>
    </subcellularLocation>
</comment>
<comment type="similarity">
    <text evidence="1">Belongs to the RNase H family.</text>
</comment>
<protein>
    <recommendedName>
        <fullName evidence="1">Ribonuclease H</fullName>
        <shortName evidence="1">RNase H</shortName>
        <ecNumber evidence="1">3.1.26.4</ecNumber>
    </recommendedName>
</protein>
<accession>A8EXT7</accession>
<organism>
    <name type="scientific">Rickettsia canadensis (strain McKiel)</name>
    <dbReference type="NCBI Taxonomy" id="293613"/>
    <lineage>
        <taxon>Bacteria</taxon>
        <taxon>Pseudomonadati</taxon>
        <taxon>Pseudomonadota</taxon>
        <taxon>Alphaproteobacteria</taxon>
        <taxon>Rickettsiales</taxon>
        <taxon>Rickettsiaceae</taxon>
        <taxon>Rickettsieae</taxon>
        <taxon>Rickettsia</taxon>
        <taxon>belli group</taxon>
    </lineage>
</organism>
<proteinExistence type="inferred from homology"/>
<sequence>MNENISKVVIYTDGACAGNPGPGGWGALLQFNDTSKEILGYELDTTNNRMEITAALEALRILKKSCNVEIYTDSKYLQQGITTWIHNWVKNNWCKSNNEAVKNADLWQKLYAELSKHTIIWKWVKGHANNSGNIAADKLAAQGRQTAIEILKCRV</sequence>
<dbReference type="EC" id="3.1.26.4" evidence="1"/>
<dbReference type="EMBL" id="CP000409">
    <property type="protein sequence ID" value="ABV73170.1"/>
    <property type="molecule type" value="Genomic_DNA"/>
</dbReference>
<dbReference type="RefSeq" id="WP_012148371.1">
    <property type="nucleotide sequence ID" value="NC_009879.1"/>
</dbReference>
<dbReference type="SMR" id="A8EXT7"/>
<dbReference type="STRING" id="293613.A1E_01125"/>
<dbReference type="KEGG" id="rcm:A1E_01125"/>
<dbReference type="eggNOG" id="COG0328">
    <property type="taxonomic scope" value="Bacteria"/>
</dbReference>
<dbReference type="HOGENOM" id="CLU_030894_6_0_5"/>
<dbReference type="Proteomes" id="UP000007056">
    <property type="component" value="Chromosome"/>
</dbReference>
<dbReference type="GO" id="GO:0005737">
    <property type="term" value="C:cytoplasm"/>
    <property type="evidence" value="ECO:0007669"/>
    <property type="project" value="UniProtKB-SubCell"/>
</dbReference>
<dbReference type="GO" id="GO:0000287">
    <property type="term" value="F:magnesium ion binding"/>
    <property type="evidence" value="ECO:0007669"/>
    <property type="project" value="UniProtKB-UniRule"/>
</dbReference>
<dbReference type="GO" id="GO:0003676">
    <property type="term" value="F:nucleic acid binding"/>
    <property type="evidence" value="ECO:0007669"/>
    <property type="project" value="InterPro"/>
</dbReference>
<dbReference type="GO" id="GO:0004523">
    <property type="term" value="F:RNA-DNA hybrid ribonuclease activity"/>
    <property type="evidence" value="ECO:0007669"/>
    <property type="project" value="UniProtKB-UniRule"/>
</dbReference>
<dbReference type="GO" id="GO:0043137">
    <property type="term" value="P:DNA replication, removal of RNA primer"/>
    <property type="evidence" value="ECO:0007669"/>
    <property type="project" value="TreeGrafter"/>
</dbReference>
<dbReference type="CDD" id="cd09278">
    <property type="entry name" value="RNase_HI_prokaryote_like"/>
    <property type="match status" value="1"/>
</dbReference>
<dbReference type="FunFam" id="3.30.420.10:FF:000089">
    <property type="entry name" value="Ribonuclease H"/>
    <property type="match status" value="1"/>
</dbReference>
<dbReference type="Gene3D" id="3.30.420.10">
    <property type="entry name" value="Ribonuclease H-like superfamily/Ribonuclease H"/>
    <property type="match status" value="1"/>
</dbReference>
<dbReference type="HAMAP" id="MF_00042">
    <property type="entry name" value="RNase_H"/>
    <property type="match status" value="1"/>
</dbReference>
<dbReference type="InterPro" id="IPR050092">
    <property type="entry name" value="RNase_H"/>
</dbReference>
<dbReference type="InterPro" id="IPR012337">
    <property type="entry name" value="RNaseH-like_sf"/>
</dbReference>
<dbReference type="InterPro" id="IPR002156">
    <property type="entry name" value="RNaseH_domain"/>
</dbReference>
<dbReference type="InterPro" id="IPR036397">
    <property type="entry name" value="RNaseH_sf"/>
</dbReference>
<dbReference type="InterPro" id="IPR022892">
    <property type="entry name" value="RNaseHI"/>
</dbReference>
<dbReference type="NCBIfam" id="NF001236">
    <property type="entry name" value="PRK00203.1"/>
    <property type="match status" value="1"/>
</dbReference>
<dbReference type="PANTHER" id="PTHR10642">
    <property type="entry name" value="RIBONUCLEASE H1"/>
    <property type="match status" value="1"/>
</dbReference>
<dbReference type="PANTHER" id="PTHR10642:SF26">
    <property type="entry name" value="RIBONUCLEASE H1"/>
    <property type="match status" value="1"/>
</dbReference>
<dbReference type="Pfam" id="PF00075">
    <property type="entry name" value="RNase_H"/>
    <property type="match status" value="1"/>
</dbReference>
<dbReference type="SUPFAM" id="SSF53098">
    <property type="entry name" value="Ribonuclease H-like"/>
    <property type="match status" value="1"/>
</dbReference>
<dbReference type="PROSITE" id="PS50879">
    <property type="entry name" value="RNASE_H_1"/>
    <property type="match status" value="1"/>
</dbReference>
<evidence type="ECO:0000255" key="1">
    <source>
        <dbReference type="HAMAP-Rule" id="MF_00042"/>
    </source>
</evidence>
<evidence type="ECO:0000255" key="2">
    <source>
        <dbReference type="PROSITE-ProRule" id="PRU00408"/>
    </source>
</evidence>
<feature type="chain" id="PRO_1000074661" description="Ribonuclease H">
    <location>
        <begin position="1"/>
        <end position="155"/>
    </location>
</feature>
<feature type="domain" description="RNase H type-1" evidence="2">
    <location>
        <begin position="4"/>
        <end position="145"/>
    </location>
</feature>
<feature type="binding site" evidence="1">
    <location>
        <position position="13"/>
    </location>
    <ligand>
        <name>Mg(2+)</name>
        <dbReference type="ChEBI" id="CHEBI:18420"/>
        <label>1</label>
    </ligand>
</feature>
<feature type="binding site" evidence="1">
    <location>
        <position position="13"/>
    </location>
    <ligand>
        <name>Mg(2+)</name>
        <dbReference type="ChEBI" id="CHEBI:18420"/>
        <label>2</label>
    </ligand>
</feature>
<feature type="binding site" evidence="1">
    <location>
        <position position="51"/>
    </location>
    <ligand>
        <name>Mg(2+)</name>
        <dbReference type="ChEBI" id="CHEBI:18420"/>
        <label>1</label>
    </ligand>
</feature>
<feature type="binding site" evidence="1">
    <location>
        <position position="73"/>
    </location>
    <ligand>
        <name>Mg(2+)</name>
        <dbReference type="ChEBI" id="CHEBI:18420"/>
        <label>1</label>
    </ligand>
</feature>
<feature type="binding site" evidence="1">
    <location>
        <position position="137"/>
    </location>
    <ligand>
        <name>Mg(2+)</name>
        <dbReference type="ChEBI" id="CHEBI:18420"/>
        <label>2</label>
    </ligand>
</feature>
<name>RNH_RICCK</name>
<reference key="1">
    <citation type="submission" date="2007-09" db="EMBL/GenBank/DDBJ databases">
        <title>Complete genome sequence of Rickettsia canadensis.</title>
        <authorList>
            <person name="Madan A."/>
            <person name="Fahey J."/>
            <person name="Helton E."/>
            <person name="Ketteman M."/>
            <person name="Madan A."/>
            <person name="Rodrigues S."/>
            <person name="Sanchez A."/>
            <person name="Whiting M."/>
            <person name="Dasch G."/>
            <person name="Eremeeva M."/>
        </authorList>
    </citation>
    <scope>NUCLEOTIDE SEQUENCE [LARGE SCALE GENOMIC DNA]</scope>
    <source>
        <strain>McKiel</strain>
    </source>
</reference>